<keyword id="KW-0067">ATP-binding</keyword>
<keyword id="KW-0143">Chaperone</keyword>
<keyword id="KW-0479">Metal-binding</keyword>
<keyword id="KW-0547">Nucleotide-binding</keyword>
<keyword id="KW-0862">Zinc</keyword>
<organism>
    <name type="scientific">Ralstonia pickettii (strain 12J)</name>
    <dbReference type="NCBI Taxonomy" id="402626"/>
    <lineage>
        <taxon>Bacteria</taxon>
        <taxon>Pseudomonadati</taxon>
        <taxon>Pseudomonadota</taxon>
        <taxon>Betaproteobacteria</taxon>
        <taxon>Burkholderiales</taxon>
        <taxon>Burkholderiaceae</taxon>
        <taxon>Ralstonia</taxon>
    </lineage>
</organism>
<protein>
    <recommendedName>
        <fullName evidence="1">ATP-dependent Clp protease ATP-binding subunit ClpX</fullName>
    </recommendedName>
</protein>
<dbReference type="EMBL" id="CP001068">
    <property type="protein sequence ID" value="ACD27004.1"/>
    <property type="molecule type" value="Genomic_DNA"/>
</dbReference>
<dbReference type="SMR" id="B2UFQ3"/>
<dbReference type="STRING" id="402626.Rpic_1868"/>
<dbReference type="KEGG" id="rpi:Rpic_1868"/>
<dbReference type="PATRIC" id="fig|402626.5.peg.3020"/>
<dbReference type="eggNOG" id="COG1219">
    <property type="taxonomic scope" value="Bacteria"/>
</dbReference>
<dbReference type="HOGENOM" id="CLU_014218_8_2_4"/>
<dbReference type="GO" id="GO:0009376">
    <property type="term" value="C:HslUV protease complex"/>
    <property type="evidence" value="ECO:0007669"/>
    <property type="project" value="TreeGrafter"/>
</dbReference>
<dbReference type="GO" id="GO:0005524">
    <property type="term" value="F:ATP binding"/>
    <property type="evidence" value="ECO:0007669"/>
    <property type="project" value="UniProtKB-UniRule"/>
</dbReference>
<dbReference type="GO" id="GO:0016887">
    <property type="term" value="F:ATP hydrolysis activity"/>
    <property type="evidence" value="ECO:0007669"/>
    <property type="project" value="InterPro"/>
</dbReference>
<dbReference type="GO" id="GO:0140662">
    <property type="term" value="F:ATP-dependent protein folding chaperone"/>
    <property type="evidence" value="ECO:0007669"/>
    <property type="project" value="InterPro"/>
</dbReference>
<dbReference type="GO" id="GO:0046983">
    <property type="term" value="F:protein dimerization activity"/>
    <property type="evidence" value="ECO:0007669"/>
    <property type="project" value="InterPro"/>
</dbReference>
<dbReference type="GO" id="GO:0051082">
    <property type="term" value="F:unfolded protein binding"/>
    <property type="evidence" value="ECO:0007669"/>
    <property type="project" value="UniProtKB-UniRule"/>
</dbReference>
<dbReference type="GO" id="GO:0008270">
    <property type="term" value="F:zinc ion binding"/>
    <property type="evidence" value="ECO:0007669"/>
    <property type="project" value="InterPro"/>
</dbReference>
<dbReference type="GO" id="GO:0051301">
    <property type="term" value="P:cell division"/>
    <property type="evidence" value="ECO:0007669"/>
    <property type="project" value="TreeGrafter"/>
</dbReference>
<dbReference type="GO" id="GO:0051603">
    <property type="term" value="P:proteolysis involved in protein catabolic process"/>
    <property type="evidence" value="ECO:0007669"/>
    <property type="project" value="TreeGrafter"/>
</dbReference>
<dbReference type="CDD" id="cd19497">
    <property type="entry name" value="RecA-like_ClpX"/>
    <property type="match status" value="1"/>
</dbReference>
<dbReference type="FunFam" id="1.10.8.60:FF:000002">
    <property type="entry name" value="ATP-dependent Clp protease ATP-binding subunit ClpX"/>
    <property type="match status" value="1"/>
</dbReference>
<dbReference type="FunFam" id="3.40.50.300:FF:000005">
    <property type="entry name" value="ATP-dependent Clp protease ATP-binding subunit ClpX"/>
    <property type="match status" value="1"/>
</dbReference>
<dbReference type="Gene3D" id="1.10.8.60">
    <property type="match status" value="1"/>
</dbReference>
<dbReference type="Gene3D" id="6.20.220.10">
    <property type="entry name" value="ClpX chaperone, C4-type zinc finger domain"/>
    <property type="match status" value="1"/>
</dbReference>
<dbReference type="Gene3D" id="3.40.50.300">
    <property type="entry name" value="P-loop containing nucleotide triphosphate hydrolases"/>
    <property type="match status" value="1"/>
</dbReference>
<dbReference type="HAMAP" id="MF_00175">
    <property type="entry name" value="ClpX"/>
    <property type="match status" value="1"/>
</dbReference>
<dbReference type="InterPro" id="IPR003593">
    <property type="entry name" value="AAA+_ATPase"/>
</dbReference>
<dbReference type="InterPro" id="IPR050052">
    <property type="entry name" value="ATP-dep_Clp_protease_ClpX"/>
</dbReference>
<dbReference type="InterPro" id="IPR003959">
    <property type="entry name" value="ATPase_AAA_core"/>
</dbReference>
<dbReference type="InterPro" id="IPR019489">
    <property type="entry name" value="Clp_ATPase_C"/>
</dbReference>
<dbReference type="InterPro" id="IPR004487">
    <property type="entry name" value="Clp_protease_ATP-bd_su_ClpX"/>
</dbReference>
<dbReference type="InterPro" id="IPR046425">
    <property type="entry name" value="ClpX_bact"/>
</dbReference>
<dbReference type="InterPro" id="IPR027417">
    <property type="entry name" value="P-loop_NTPase"/>
</dbReference>
<dbReference type="InterPro" id="IPR010603">
    <property type="entry name" value="Znf_CppX_C4"/>
</dbReference>
<dbReference type="InterPro" id="IPR038366">
    <property type="entry name" value="Znf_CppX_C4_sf"/>
</dbReference>
<dbReference type="NCBIfam" id="TIGR00382">
    <property type="entry name" value="clpX"/>
    <property type="match status" value="1"/>
</dbReference>
<dbReference type="NCBIfam" id="NF003745">
    <property type="entry name" value="PRK05342.1"/>
    <property type="match status" value="1"/>
</dbReference>
<dbReference type="PANTHER" id="PTHR48102:SF7">
    <property type="entry name" value="ATP-DEPENDENT CLP PROTEASE ATP-BINDING SUBUNIT CLPX-LIKE, MITOCHONDRIAL"/>
    <property type="match status" value="1"/>
</dbReference>
<dbReference type="PANTHER" id="PTHR48102">
    <property type="entry name" value="ATP-DEPENDENT CLP PROTEASE ATP-BINDING SUBUNIT CLPX-LIKE, MITOCHONDRIAL-RELATED"/>
    <property type="match status" value="1"/>
</dbReference>
<dbReference type="Pfam" id="PF07724">
    <property type="entry name" value="AAA_2"/>
    <property type="match status" value="1"/>
</dbReference>
<dbReference type="Pfam" id="PF10431">
    <property type="entry name" value="ClpB_D2-small"/>
    <property type="match status" value="1"/>
</dbReference>
<dbReference type="Pfam" id="PF06689">
    <property type="entry name" value="zf-C4_ClpX"/>
    <property type="match status" value="1"/>
</dbReference>
<dbReference type="SMART" id="SM00382">
    <property type="entry name" value="AAA"/>
    <property type="match status" value="1"/>
</dbReference>
<dbReference type="SMART" id="SM01086">
    <property type="entry name" value="ClpB_D2-small"/>
    <property type="match status" value="1"/>
</dbReference>
<dbReference type="SMART" id="SM00994">
    <property type="entry name" value="zf-C4_ClpX"/>
    <property type="match status" value="1"/>
</dbReference>
<dbReference type="SUPFAM" id="SSF57716">
    <property type="entry name" value="Glucocorticoid receptor-like (DNA-binding domain)"/>
    <property type="match status" value="1"/>
</dbReference>
<dbReference type="SUPFAM" id="SSF52540">
    <property type="entry name" value="P-loop containing nucleoside triphosphate hydrolases"/>
    <property type="match status" value="1"/>
</dbReference>
<dbReference type="PROSITE" id="PS51902">
    <property type="entry name" value="CLPX_ZB"/>
    <property type="match status" value="1"/>
</dbReference>
<comment type="function">
    <text evidence="1">ATP-dependent specificity component of the Clp protease. It directs the protease to specific substrates. Can perform chaperone functions in the absence of ClpP.</text>
</comment>
<comment type="subunit">
    <text evidence="1">Component of the ClpX-ClpP complex. Forms a hexameric ring that, in the presence of ATP, binds to fourteen ClpP subunits assembled into a disk-like structure with a central cavity, resembling the structure of eukaryotic proteasomes.</text>
</comment>
<comment type="similarity">
    <text evidence="1">Belongs to the ClpX chaperone family.</text>
</comment>
<sequence length="424" mass="46463">MADKKGSTGEKLLYCSFCGKSQHEVKKLIAGPSVFICDECIDLCNEIIRDEAAISEKEGGLAVKSDLPTPHEIRQSLDQYVIGQEQAKKILAVAVYNHYKRLKHLGKKDDVELSKSNILLIGPTGSGKTLLAQTLARLLNVPFVIADATTLTEAGYVGEDVENIIQKLLQNCNYEVDKAQRGIVYIDEIDKISRKSDNPSITRDVSGEGVQQALLKLVEGTMASVPPQGGRKHPNQDFLQVDTTNILFICGGAFDGLEKIIMQRSDKTGIGFGAEVQSKEERDVSEVLPQVEPEDLIKFGLIPELIGRLPVVATLAKLDEAALMEILVEPKNAIVKQYQKLLAMEGVELEIRPSGLTAIARKAIKRKTGARGLRSIVEHALMDVMYDLPNHKGVQKVVIDESTISDEGKPLLIYEEQPKVAGSN</sequence>
<reference key="1">
    <citation type="submission" date="2008-05" db="EMBL/GenBank/DDBJ databases">
        <title>Complete sequence of chromosome 1 of Ralstonia pickettii 12J.</title>
        <authorList>
            <person name="Lucas S."/>
            <person name="Copeland A."/>
            <person name="Lapidus A."/>
            <person name="Glavina del Rio T."/>
            <person name="Dalin E."/>
            <person name="Tice H."/>
            <person name="Bruce D."/>
            <person name="Goodwin L."/>
            <person name="Pitluck S."/>
            <person name="Meincke L."/>
            <person name="Brettin T."/>
            <person name="Detter J.C."/>
            <person name="Han C."/>
            <person name="Kuske C.R."/>
            <person name="Schmutz J."/>
            <person name="Larimer F."/>
            <person name="Land M."/>
            <person name="Hauser L."/>
            <person name="Kyrpides N."/>
            <person name="Mikhailova N."/>
            <person name="Marsh T."/>
            <person name="Richardson P."/>
        </authorList>
    </citation>
    <scope>NUCLEOTIDE SEQUENCE [LARGE SCALE GENOMIC DNA]</scope>
    <source>
        <strain>12J</strain>
    </source>
</reference>
<gene>
    <name evidence="1" type="primary">clpX</name>
    <name type="ordered locus">Rpic_1868</name>
</gene>
<proteinExistence type="inferred from homology"/>
<evidence type="ECO:0000255" key="1">
    <source>
        <dbReference type="HAMAP-Rule" id="MF_00175"/>
    </source>
</evidence>
<evidence type="ECO:0000255" key="2">
    <source>
        <dbReference type="PROSITE-ProRule" id="PRU01250"/>
    </source>
</evidence>
<name>CLPX_RALPJ</name>
<feature type="chain" id="PRO_1000097987" description="ATP-dependent Clp protease ATP-binding subunit ClpX">
    <location>
        <begin position="1"/>
        <end position="424"/>
    </location>
</feature>
<feature type="domain" description="ClpX-type ZB" evidence="2">
    <location>
        <begin position="3"/>
        <end position="56"/>
    </location>
</feature>
<feature type="binding site" evidence="2">
    <location>
        <position position="15"/>
    </location>
    <ligand>
        <name>Zn(2+)</name>
        <dbReference type="ChEBI" id="CHEBI:29105"/>
    </ligand>
</feature>
<feature type="binding site" evidence="2">
    <location>
        <position position="18"/>
    </location>
    <ligand>
        <name>Zn(2+)</name>
        <dbReference type="ChEBI" id="CHEBI:29105"/>
    </ligand>
</feature>
<feature type="binding site" evidence="2">
    <location>
        <position position="37"/>
    </location>
    <ligand>
        <name>Zn(2+)</name>
        <dbReference type="ChEBI" id="CHEBI:29105"/>
    </ligand>
</feature>
<feature type="binding site" evidence="2">
    <location>
        <position position="40"/>
    </location>
    <ligand>
        <name>Zn(2+)</name>
        <dbReference type="ChEBI" id="CHEBI:29105"/>
    </ligand>
</feature>
<feature type="binding site" evidence="1">
    <location>
        <begin position="123"/>
        <end position="130"/>
    </location>
    <ligand>
        <name>ATP</name>
        <dbReference type="ChEBI" id="CHEBI:30616"/>
    </ligand>
</feature>
<accession>B2UFQ3</accession>